<protein>
    <recommendedName>
        <fullName evidence="1">2,3,4,5-tetrahydropyridine-2,6-dicarboxylate N-succinyltransferase</fullName>
        <ecNumber evidence="1">2.3.1.117</ecNumber>
    </recommendedName>
    <alternativeName>
        <fullName evidence="1">Tetrahydrodipicolinate N-succinyltransferase</fullName>
        <shortName evidence="1">THDP succinyltransferase</shortName>
        <shortName evidence="1">THP succinyltransferase</shortName>
        <shortName evidence="1">Tetrahydropicolinate succinylase</shortName>
    </alternativeName>
</protein>
<evidence type="ECO:0000255" key="1">
    <source>
        <dbReference type="HAMAP-Rule" id="MF_00811"/>
    </source>
</evidence>
<reference key="1">
    <citation type="submission" date="2008-02" db="EMBL/GenBank/DDBJ databases">
        <title>Complete sequence of Haemophilus somnus 2336.</title>
        <authorList>
            <consortium name="US DOE Joint Genome Institute"/>
            <person name="Siddaramappa S."/>
            <person name="Duncan A.J."/>
            <person name="Challacombe J.F."/>
            <person name="Rainey D."/>
            <person name="Gillaspy A.F."/>
            <person name="Carson M."/>
            <person name="Gipson J."/>
            <person name="Gipson M."/>
            <person name="Bruce D."/>
            <person name="Detter J.C."/>
            <person name="Han C.S."/>
            <person name="Land M."/>
            <person name="Tapia R."/>
            <person name="Thompson L.S."/>
            <person name="Orvis J."/>
            <person name="Zaitshik J."/>
            <person name="Barnes G."/>
            <person name="Brettin T.S."/>
            <person name="Dyer D.W."/>
            <person name="Inzana T.J."/>
        </authorList>
    </citation>
    <scope>NUCLEOTIDE SEQUENCE [LARGE SCALE GENOMIC DNA]</scope>
    <source>
        <strain>2336</strain>
    </source>
</reference>
<dbReference type="EC" id="2.3.1.117" evidence="1"/>
<dbReference type="EMBL" id="CP000947">
    <property type="protein sequence ID" value="ACA30981.1"/>
    <property type="molecule type" value="Genomic_DNA"/>
</dbReference>
<dbReference type="RefSeq" id="WP_011608938.1">
    <property type="nucleotide sequence ID" value="NC_010519.1"/>
</dbReference>
<dbReference type="SMR" id="B0UTX7"/>
<dbReference type="STRING" id="228400.HSM_1252"/>
<dbReference type="GeneID" id="31487555"/>
<dbReference type="KEGG" id="hsm:HSM_1252"/>
<dbReference type="HOGENOM" id="CLU_050859_0_1_6"/>
<dbReference type="UniPathway" id="UPA00034">
    <property type="reaction ID" value="UER00019"/>
</dbReference>
<dbReference type="GO" id="GO:0005737">
    <property type="term" value="C:cytoplasm"/>
    <property type="evidence" value="ECO:0007669"/>
    <property type="project" value="UniProtKB-SubCell"/>
</dbReference>
<dbReference type="GO" id="GO:0008666">
    <property type="term" value="F:2,3,4,5-tetrahydropyridine-2,6-dicarboxylate N-succinyltransferase activity"/>
    <property type="evidence" value="ECO:0007669"/>
    <property type="project" value="UniProtKB-UniRule"/>
</dbReference>
<dbReference type="GO" id="GO:0016779">
    <property type="term" value="F:nucleotidyltransferase activity"/>
    <property type="evidence" value="ECO:0007669"/>
    <property type="project" value="TreeGrafter"/>
</dbReference>
<dbReference type="GO" id="GO:0019877">
    <property type="term" value="P:diaminopimelate biosynthetic process"/>
    <property type="evidence" value="ECO:0007669"/>
    <property type="project" value="UniProtKB-UniRule"/>
</dbReference>
<dbReference type="GO" id="GO:0009089">
    <property type="term" value="P:lysine biosynthetic process via diaminopimelate"/>
    <property type="evidence" value="ECO:0007669"/>
    <property type="project" value="UniProtKB-UniRule"/>
</dbReference>
<dbReference type="CDD" id="cd03350">
    <property type="entry name" value="LbH_THP_succinylT"/>
    <property type="match status" value="1"/>
</dbReference>
<dbReference type="Gene3D" id="2.160.10.10">
    <property type="entry name" value="Hexapeptide repeat proteins"/>
    <property type="match status" value="1"/>
</dbReference>
<dbReference type="Gene3D" id="1.10.166.10">
    <property type="entry name" value="Tetrahydrodipicolinate-N-succinyltransferase, N-terminal domain"/>
    <property type="match status" value="1"/>
</dbReference>
<dbReference type="HAMAP" id="MF_00811">
    <property type="entry name" value="DapD"/>
    <property type="match status" value="1"/>
</dbReference>
<dbReference type="InterPro" id="IPR005664">
    <property type="entry name" value="DapD_Trfase_Hexpep_rpt_fam"/>
</dbReference>
<dbReference type="InterPro" id="IPR001451">
    <property type="entry name" value="Hexapep"/>
</dbReference>
<dbReference type="InterPro" id="IPR018357">
    <property type="entry name" value="Hexapep_transf_CS"/>
</dbReference>
<dbReference type="InterPro" id="IPR023180">
    <property type="entry name" value="THP_succinylTrfase_dom1"/>
</dbReference>
<dbReference type="InterPro" id="IPR037133">
    <property type="entry name" value="THP_succinylTrfase_N_sf"/>
</dbReference>
<dbReference type="InterPro" id="IPR011004">
    <property type="entry name" value="Trimer_LpxA-like_sf"/>
</dbReference>
<dbReference type="NCBIfam" id="TIGR00965">
    <property type="entry name" value="dapD"/>
    <property type="match status" value="1"/>
</dbReference>
<dbReference type="NCBIfam" id="NF008808">
    <property type="entry name" value="PRK11830.1"/>
    <property type="match status" value="1"/>
</dbReference>
<dbReference type="PANTHER" id="PTHR19136:SF52">
    <property type="entry name" value="2,3,4,5-TETRAHYDROPYRIDINE-2,6-DICARBOXYLATE N-SUCCINYLTRANSFERASE"/>
    <property type="match status" value="1"/>
</dbReference>
<dbReference type="PANTHER" id="PTHR19136">
    <property type="entry name" value="MOLYBDENUM COFACTOR GUANYLYLTRANSFERASE"/>
    <property type="match status" value="1"/>
</dbReference>
<dbReference type="Pfam" id="PF14602">
    <property type="entry name" value="Hexapep_2"/>
    <property type="match status" value="1"/>
</dbReference>
<dbReference type="Pfam" id="PF14805">
    <property type="entry name" value="THDPS_N_2"/>
    <property type="match status" value="1"/>
</dbReference>
<dbReference type="SUPFAM" id="SSF51161">
    <property type="entry name" value="Trimeric LpxA-like enzymes"/>
    <property type="match status" value="1"/>
</dbReference>
<dbReference type="PROSITE" id="PS00101">
    <property type="entry name" value="HEXAPEP_TRANSFERASES"/>
    <property type="match status" value="1"/>
</dbReference>
<comment type="catalytic activity">
    <reaction evidence="1">
        <text>(S)-2,3,4,5-tetrahydrodipicolinate + succinyl-CoA + H2O = (S)-2-succinylamino-6-oxoheptanedioate + CoA</text>
        <dbReference type="Rhea" id="RHEA:17325"/>
        <dbReference type="ChEBI" id="CHEBI:15377"/>
        <dbReference type="ChEBI" id="CHEBI:15685"/>
        <dbReference type="ChEBI" id="CHEBI:16845"/>
        <dbReference type="ChEBI" id="CHEBI:57287"/>
        <dbReference type="ChEBI" id="CHEBI:57292"/>
        <dbReference type="EC" id="2.3.1.117"/>
    </reaction>
</comment>
<comment type="pathway">
    <text evidence="1">Amino-acid biosynthesis; L-lysine biosynthesis via DAP pathway; LL-2,6-diaminopimelate from (S)-tetrahydrodipicolinate (succinylase route): step 1/3.</text>
</comment>
<comment type="subunit">
    <text evidence="1">Homotrimer.</text>
</comment>
<comment type="subcellular location">
    <subcellularLocation>
        <location evidence="1">Cytoplasm</location>
    </subcellularLocation>
</comment>
<comment type="similarity">
    <text evidence="1">Belongs to the transferase hexapeptide repeat family.</text>
</comment>
<accession>B0UTX7</accession>
<feature type="chain" id="PRO_1000083752" description="2,3,4,5-tetrahydropyridine-2,6-dicarboxylate N-succinyltransferase">
    <location>
        <begin position="1"/>
        <end position="275"/>
    </location>
</feature>
<feature type="binding site" evidence="1">
    <location>
        <position position="105"/>
    </location>
    <ligand>
        <name>substrate</name>
    </ligand>
</feature>
<feature type="binding site" evidence="1">
    <location>
        <position position="142"/>
    </location>
    <ligand>
        <name>substrate</name>
    </ligand>
</feature>
<proteinExistence type="inferred from homology"/>
<organism>
    <name type="scientific">Histophilus somni (strain 2336)</name>
    <name type="common">Haemophilus somnus</name>
    <dbReference type="NCBI Taxonomy" id="228400"/>
    <lineage>
        <taxon>Bacteria</taxon>
        <taxon>Pseudomonadati</taxon>
        <taxon>Pseudomonadota</taxon>
        <taxon>Gammaproteobacteria</taxon>
        <taxon>Pasteurellales</taxon>
        <taxon>Pasteurellaceae</taxon>
        <taxon>Histophilus</taxon>
    </lineage>
</organism>
<gene>
    <name evidence="1" type="primary">dapD</name>
    <name type="ordered locus">HSM_1252</name>
</gene>
<sequence>MSNLQNIIECAFERVAEITPTNAEAELRAAVDEAIEGLDKGIYRVAEKNEQGEWIVNQWLKKAVLLSFRLNDNVVVDGAETKYYDKVPVKFADYDVERFKTEGFRAVPGAVVRKGSHISKGVVLMPSFVNIGAYVGEGTMVDTWATVGSCAQIGKNVHLSGGVGIGGVLEPLQANPTIIGDNCFIGARSEIVEGVIVEEGCVISMGVFIGQSTKIYDRETGEIFYGRVPAGSVVVSGSLPSKCGKYNLYCAVIVKKVDAKTLGKVGINELLRTIE</sequence>
<name>DAPD_HISS2</name>
<keyword id="KW-0012">Acyltransferase</keyword>
<keyword id="KW-0028">Amino-acid biosynthesis</keyword>
<keyword id="KW-0963">Cytoplasm</keyword>
<keyword id="KW-0220">Diaminopimelate biosynthesis</keyword>
<keyword id="KW-0457">Lysine biosynthesis</keyword>
<keyword id="KW-0677">Repeat</keyword>
<keyword id="KW-0808">Transferase</keyword>